<dbReference type="EMBL" id="AE008691">
    <property type="protein sequence ID" value="AAM23897.1"/>
    <property type="molecule type" value="Genomic_DNA"/>
</dbReference>
<dbReference type="RefSeq" id="WP_009610832.1">
    <property type="nucleotide sequence ID" value="NC_003869.1"/>
</dbReference>
<dbReference type="SMR" id="Q8RC22"/>
<dbReference type="STRING" id="273068.TTE0628"/>
<dbReference type="KEGG" id="tte:TTE0628"/>
<dbReference type="eggNOG" id="COG0218">
    <property type="taxonomic scope" value="Bacteria"/>
</dbReference>
<dbReference type="HOGENOM" id="CLU_033732_3_0_9"/>
<dbReference type="OrthoDB" id="9804921at2"/>
<dbReference type="Proteomes" id="UP000000555">
    <property type="component" value="Chromosome"/>
</dbReference>
<dbReference type="GO" id="GO:0005829">
    <property type="term" value="C:cytosol"/>
    <property type="evidence" value="ECO:0007669"/>
    <property type="project" value="TreeGrafter"/>
</dbReference>
<dbReference type="GO" id="GO:0005525">
    <property type="term" value="F:GTP binding"/>
    <property type="evidence" value="ECO:0007669"/>
    <property type="project" value="UniProtKB-UniRule"/>
</dbReference>
<dbReference type="GO" id="GO:0046872">
    <property type="term" value="F:metal ion binding"/>
    <property type="evidence" value="ECO:0007669"/>
    <property type="project" value="UniProtKB-KW"/>
</dbReference>
<dbReference type="GO" id="GO:0000917">
    <property type="term" value="P:division septum assembly"/>
    <property type="evidence" value="ECO:0007669"/>
    <property type="project" value="UniProtKB-KW"/>
</dbReference>
<dbReference type="CDD" id="cd01876">
    <property type="entry name" value="YihA_EngB"/>
    <property type="match status" value="1"/>
</dbReference>
<dbReference type="FunFam" id="3.40.50.300:FF:000098">
    <property type="entry name" value="Probable GTP-binding protein EngB"/>
    <property type="match status" value="1"/>
</dbReference>
<dbReference type="Gene3D" id="3.40.50.300">
    <property type="entry name" value="P-loop containing nucleotide triphosphate hydrolases"/>
    <property type="match status" value="1"/>
</dbReference>
<dbReference type="HAMAP" id="MF_00321">
    <property type="entry name" value="GTPase_EngB"/>
    <property type="match status" value="1"/>
</dbReference>
<dbReference type="InterPro" id="IPR030393">
    <property type="entry name" value="G_ENGB_dom"/>
</dbReference>
<dbReference type="InterPro" id="IPR006073">
    <property type="entry name" value="GTP-bd"/>
</dbReference>
<dbReference type="InterPro" id="IPR019987">
    <property type="entry name" value="GTP-bd_ribosome_bio_YsxC"/>
</dbReference>
<dbReference type="InterPro" id="IPR027417">
    <property type="entry name" value="P-loop_NTPase"/>
</dbReference>
<dbReference type="InterPro" id="IPR005225">
    <property type="entry name" value="Small_GTP-bd"/>
</dbReference>
<dbReference type="NCBIfam" id="TIGR03598">
    <property type="entry name" value="GTPase_YsxC"/>
    <property type="match status" value="1"/>
</dbReference>
<dbReference type="NCBIfam" id="TIGR00231">
    <property type="entry name" value="small_GTP"/>
    <property type="match status" value="1"/>
</dbReference>
<dbReference type="PANTHER" id="PTHR11649:SF13">
    <property type="entry name" value="ENGB-TYPE G DOMAIN-CONTAINING PROTEIN"/>
    <property type="match status" value="1"/>
</dbReference>
<dbReference type="PANTHER" id="PTHR11649">
    <property type="entry name" value="MSS1/TRME-RELATED GTP-BINDING PROTEIN"/>
    <property type="match status" value="1"/>
</dbReference>
<dbReference type="Pfam" id="PF01926">
    <property type="entry name" value="MMR_HSR1"/>
    <property type="match status" value="1"/>
</dbReference>
<dbReference type="SUPFAM" id="SSF52540">
    <property type="entry name" value="P-loop containing nucleoside triphosphate hydrolases"/>
    <property type="match status" value="1"/>
</dbReference>
<dbReference type="PROSITE" id="PS51706">
    <property type="entry name" value="G_ENGB"/>
    <property type="match status" value="1"/>
</dbReference>
<organism>
    <name type="scientific">Caldanaerobacter subterraneus subsp. tengcongensis (strain DSM 15242 / JCM 11007 / NBRC 100824 / MB4)</name>
    <name type="common">Thermoanaerobacter tengcongensis</name>
    <dbReference type="NCBI Taxonomy" id="273068"/>
    <lineage>
        <taxon>Bacteria</taxon>
        <taxon>Bacillati</taxon>
        <taxon>Bacillota</taxon>
        <taxon>Clostridia</taxon>
        <taxon>Thermoanaerobacterales</taxon>
        <taxon>Thermoanaerobacteraceae</taxon>
        <taxon>Caldanaerobacter</taxon>
    </lineage>
</organism>
<reference key="1">
    <citation type="journal article" date="2002" name="Genome Res.">
        <title>A complete sequence of the T. tengcongensis genome.</title>
        <authorList>
            <person name="Bao Q."/>
            <person name="Tian Y."/>
            <person name="Li W."/>
            <person name="Xu Z."/>
            <person name="Xuan Z."/>
            <person name="Hu S."/>
            <person name="Dong W."/>
            <person name="Yang J."/>
            <person name="Chen Y."/>
            <person name="Xue Y."/>
            <person name="Xu Y."/>
            <person name="Lai X."/>
            <person name="Huang L."/>
            <person name="Dong X."/>
            <person name="Ma Y."/>
            <person name="Ling L."/>
            <person name="Tan H."/>
            <person name="Chen R."/>
            <person name="Wang J."/>
            <person name="Yu J."/>
            <person name="Yang H."/>
        </authorList>
    </citation>
    <scope>NUCLEOTIDE SEQUENCE [LARGE SCALE GENOMIC DNA]</scope>
    <source>
        <strain>DSM 15242 / JCM 11007 / NBRC 100824 / MB4</strain>
    </source>
</reference>
<sequence length="194" mass="21998">MKIKTAEFVGSAFNESQYPKDKIPQIAIVGKSNVGKSTLINTVLGRKNLAKVSSTPGKTRGINFYLVNRAFYIVDLPGYGYAKVSKEMKKQWAYNIETFLNTSKNLKHALLLIDIRREPTEDDFMMVNWFSFKNLPFSVVLTKADKVNKSEANKAIENICRSFNISSDRVIVFSAVEKTGISEILRIFEEVIEK</sequence>
<proteinExistence type="inferred from homology"/>
<feature type="chain" id="PRO_0000157795" description="Probable GTP-binding protein EngB">
    <location>
        <begin position="1"/>
        <end position="194"/>
    </location>
</feature>
<feature type="domain" description="EngB-type G" evidence="1">
    <location>
        <begin position="22"/>
        <end position="194"/>
    </location>
</feature>
<feature type="binding site" evidence="1">
    <location>
        <begin position="30"/>
        <end position="37"/>
    </location>
    <ligand>
        <name>GTP</name>
        <dbReference type="ChEBI" id="CHEBI:37565"/>
    </ligand>
</feature>
<feature type="binding site" evidence="1">
    <location>
        <position position="37"/>
    </location>
    <ligand>
        <name>Mg(2+)</name>
        <dbReference type="ChEBI" id="CHEBI:18420"/>
    </ligand>
</feature>
<feature type="binding site" evidence="1">
    <location>
        <begin position="57"/>
        <end position="61"/>
    </location>
    <ligand>
        <name>GTP</name>
        <dbReference type="ChEBI" id="CHEBI:37565"/>
    </ligand>
</feature>
<feature type="binding site" evidence="1">
    <location>
        <position position="59"/>
    </location>
    <ligand>
        <name>Mg(2+)</name>
        <dbReference type="ChEBI" id="CHEBI:18420"/>
    </ligand>
</feature>
<feature type="binding site" evidence="1">
    <location>
        <begin position="75"/>
        <end position="78"/>
    </location>
    <ligand>
        <name>GTP</name>
        <dbReference type="ChEBI" id="CHEBI:37565"/>
    </ligand>
</feature>
<feature type="binding site" evidence="1">
    <location>
        <begin position="142"/>
        <end position="145"/>
    </location>
    <ligand>
        <name>GTP</name>
        <dbReference type="ChEBI" id="CHEBI:37565"/>
    </ligand>
</feature>
<feature type="binding site" evidence="1">
    <location>
        <begin position="173"/>
        <end position="175"/>
    </location>
    <ligand>
        <name>GTP</name>
        <dbReference type="ChEBI" id="CHEBI:37565"/>
    </ligand>
</feature>
<name>ENGB_CALS4</name>
<keyword id="KW-0131">Cell cycle</keyword>
<keyword id="KW-0132">Cell division</keyword>
<keyword id="KW-0342">GTP-binding</keyword>
<keyword id="KW-0460">Magnesium</keyword>
<keyword id="KW-0479">Metal-binding</keyword>
<keyword id="KW-0547">Nucleotide-binding</keyword>
<keyword id="KW-1185">Reference proteome</keyword>
<keyword id="KW-0717">Septation</keyword>
<evidence type="ECO:0000255" key="1">
    <source>
        <dbReference type="HAMAP-Rule" id="MF_00321"/>
    </source>
</evidence>
<gene>
    <name evidence="1" type="primary">engB</name>
    <name type="ordered locus">TTE0628</name>
</gene>
<protein>
    <recommendedName>
        <fullName evidence="1">Probable GTP-binding protein EngB</fullName>
    </recommendedName>
</protein>
<comment type="function">
    <text evidence="1">Necessary for normal cell division and for the maintenance of normal septation.</text>
</comment>
<comment type="cofactor">
    <cofactor evidence="1">
        <name>Mg(2+)</name>
        <dbReference type="ChEBI" id="CHEBI:18420"/>
    </cofactor>
</comment>
<comment type="similarity">
    <text evidence="1">Belongs to the TRAFAC class TrmE-Era-EngA-EngB-Septin-like GTPase superfamily. EngB GTPase family.</text>
</comment>
<accession>Q8RC22</accession>